<keyword id="KW-0028">Amino-acid biosynthesis</keyword>
<keyword id="KW-0100">Branched-chain amino acid biosynthesis</keyword>
<keyword id="KW-0460">Magnesium</keyword>
<keyword id="KW-0479">Metal-binding</keyword>
<keyword id="KW-0521">NADP</keyword>
<keyword id="KW-0560">Oxidoreductase</keyword>
<keyword id="KW-0677">Repeat</keyword>
<comment type="function">
    <text evidence="1">Involved in the biosynthesis of branched-chain amino acids (BCAA). Catalyzes an alkyl-migration followed by a ketol-acid reduction of (S)-2-acetolactate (S2AL) to yield (R)-2,3-dihydroxy-isovalerate. In the isomerase reaction, S2AL is rearranged via a Mg-dependent methyl migration to produce 3-hydroxy-3-methyl-2-ketobutyrate (HMKB). In the reductase reaction, this 2-ketoacid undergoes a metal-dependent reduction by NADPH to yield (R)-2,3-dihydroxy-isovalerate.</text>
</comment>
<comment type="catalytic activity">
    <reaction evidence="1">
        <text>(2R)-2,3-dihydroxy-3-methylbutanoate + NADP(+) = (2S)-2-acetolactate + NADPH + H(+)</text>
        <dbReference type="Rhea" id="RHEA:22068"/>
        <dbReference type="ChEBI" id="CHEBI:15378"/>
        <dbReference type="ChEBI" id="CHEBI:49072"/>
        <dbReference type="ChEBI" id="CHEBI:57783"/>
        <dbReference type="ChEBI" id="CHEBI:58349"/>
        <dbReference type="ChEBI" id="CHEBI:58476"/>
        <dbReference type="EC" id="1.1.1.86"/>
    </reaction>
</comment>
<comment type="catalytic activity">
    <reaction evidence="1">
        <text>(2R,3R)-2,3-dihydroxy-3-methylpentanoate + NADP(+) = (S)-2-ethyl-2-hydroxy-3-oxobutanoate + NADPH + H(+)</text>
        <dbReference type="Rhea" id="RHEA:13493"/>
        <dbReference type="ChEBI" id="CHEBI:15378"/>
        <dbReference type="ChEBI" id="CHEBI:49256"/>
        <dbReference type="ChEBI" id="CHEBI:49258"/>
        <dbReference type="ChEBI" id="CHEBI:57783"/>
        <dbReference type="ChEBI" id="CHEBI:58349"/>
        <dbReference type="EC" id="1.1.1.86"/>
    </reaction>
</comment>
<comment type="cofactor">
    <cofactor evidence="1">
        <name>Mg(2+)</name>
        <dbReference type="ChEBI" id="CHEBI:18420"/>
    </cofactor>
    <text evidence="1">Binds 2 magnesium ions per subunit.</text>
</comment>
<comment type="pathway">
    <text evidence="1">Amino-acid biosynthesis; L-isoleucine biosynthesis; L-isoleucine from 2-oxobutanoate: step 2/4.</text>
</comment>
<comment type="pathway">
    <text evidence="1">Amino-acid biosynthesis; L-valine biosynthesis; L-valine from pyruvate: step 2/4.</text>
</comment>
<comment type="similarity">
    <text evidence="1">Belongs to the ketol-acid reductoisomerase family.</text>
</comment>
<sequence length="494" mass="54695">MANYFNTLNLREQLDQLGRCRFMDREEFVSEADYLKGKKVVIVGCGAQGLNQGLNMRDSGLDVSYALRQAAIDEQRQSFKNAKDNGFEVGSYETLIPQADLVVNLTPDKQHTNVVETVMPLMKEGAALGYSHGFNVVEEGMQIRKDLTVVMVAPKCPGTEVREEYKRGFGVPTLIAVHPENDPKGEGWDIAKAWAAATGGHRAGCLESSFVAEVKSDLMGEQTILCGMLQAGSIVCYEKMIAEGIDPGYAGKLLQYGWETITEALKFGGITHMMDRLSNPAKIKAFELSEELKDLMRPLYNKHMDDIISGHFSSTMMADWANDDKNLLGWRAETGETAFENYPETDVEISEQEYFDNGILMVAMVRAGVELAFEAMTASGIIDESAYYESLHELPLIANTIARKRLYEMNVVISDTAEYGNYLFANVATPLLREKFMPSVGTDVIGKGLGETSNQVDNATLIAVNETIRNHPVEYIGEELRGYMTDMKRIAVGG</sequence>
<evidence type="ECO:0000255" key="1">
    <source>
        <dbReference type="HAMAP-Rule" id="MF_00435"/>
    </source>
</evidence>
<evidence type="ECO:0000255" key="2">
    <source>
        <dbReference type="PROSITE-ProRule" id="PRU01197"/>
    </source>
</evidence>
<evidence type="ECO:0000255" key="3">
    <source>
        <dbReference type="PROSITE-ProRule" id="PRU01198"/>
    </source>
</evidence>
<name>ILVC_VIBPA</name>
<reference key="1">
    <citation type="journal article" date="2003" name="Lancet">
        <title>Genome sequence of Vibrio parahaemolyticus: a pathogenic mechanism distinct from that of V. cholerae.</title>
        <authorList>
            <person name="Makino K."/>
            <person name="Oshima K."/>
            <person name="Kurokawa K."/>
            <person name="Yokoyama K."/>
            <person name="Uda T."/>
            <person name="Tagomori K."/>
            <person name="Iijima Y."/>
            <person name="Najima M."/>
            <person name="Nakano M."/>
            <person name="Yamashita A."/>
            <person name="Kubota Y."/>
            <person name="Kimura S."/>
            <person name="Yasunaga T."/>
            <person name="Honda T."/>
            <person name="Shinagawa H."/>
            <person name="Hattori M."/>
            <person name="Iida T."/>
        </authorList>
    </citation>
    <scope>NUCLEOTIDE SEQUENCE [LARGE SCALE GENOMIC DNA]</scope>
    <source>
        <strain>RIMD 2210633</strain>
    </source>
</reference>
<gene>
    <name evidence="1" type="primary">ilvC</name>
    <name type="ordered locus">VP0035</name>
</gene>
<proteinExistence type="inferred from homology"/>
<organism>
    <name type="scientific">Vibrio parahaemolyticus serotype O3:K6 (strain RIMD 2210633)</name>
    <dbReference type="NCBI Taxonomy" id="223926"/>
    <lineage>
        <taxon>Bacteria</taxon>
        <taxon>Pseudomonadati</taxon>
        <taxon>Pseudomonadota</taxon>
        <taxon>Gammaproteobacteria</taxon>
        <taxon>Vibrionales</taxon>
        <taxon>Vibrionaceae</taxon>
        <taxon>Vibrio</taxon>
    </lineage>
</organism>
<accession>Q87TN4</accession>
<feature type="chain" id="PRO_0000151379" description="Ketol-acid reductoisomerase (NADP(+))">
    <location>
        <begin position="1"/>
        <end position="494"/>
    </location>
</feature>
<feature type="domain" description="KARI N-terminal Rossmann" evidence="2">
    <location>
        <begin position="14"/>
        <end position="208"/>
    </location>
</feature>
<feature type="domain" description="KARI C-terminal knotted 1" evidence="3">
    <location>
        <begin position="209"/>
        <end position="344"/>
    </location>
</feature>
<feature type="domain" description="KARI C-terminal knotted 2" evidence="3">
    <location>
        <begin position="345"/>
        <end position="487"/>
    </location>
</feature>
<feature type="active site" evidence="1">
    <location>
        <position position="132"/>
    </location>
</feature>
<feature type="binding site" evidence="1">
    <location>
        <begin position="45"/>
        <end position="48"/>
    </location>
    <ligand>
        <name>NADP(+)</name>
        <dbReference type="ChEBI" id="CHEBI:58349"/>
    </ligand>
</feature>
<feature type="binding site" evidence="1">
    <location>
        <position position="68"/>
    </location>
    <ligand>
        <name>NADP(+)</name>
        <dbReference type="ChEBI" id="CHEBI:58349"/>
    </ligand>
</feature>
<feature type="binding site" evidence="1">
    <location>
        <position position="76"/>
    </location>
    <ligand>
        <name>NADP(+)</name>
        <dbReference type="ChEBI" id="CHEBI:58349"/>
    </ligand>
</feature>
<feature type="binding site" evidence="1">
    <location>
        <position position="78"/>
    </location>
    <ligand>
        <name>NADP(+)</name>
        <dbReference type="ChEBI" id="CHEBI:58349"/>
    </ligand>
</feature>
<feature type="binding site" evidence="1">
    <location>
        <begin position="108"/>
        <end position="110"/>
    </location>
    <ligand>
        <name>NADP(+)</name>
        <dbReference type="ChEBI" id="CHEBI:58349"/>
    </ligand>
</feature>
<feature type="binding site" evidence="1">
    <location>
        <position position="158"/>
    </location>
    <ligand>
        <name>NADP(+)</name>
        <dbReference type="ChEBI" id="CHEBI:58349"/>
    </ligand>
</feature>
<feature type="binding site" evidence="1">
    <location>
        <position position="217"/>
    </location>
    <ligand>
        <name>Mg(2+)</name>
        <dbReference type="ChEBI" id="CHEBI:18420"/>
        <label>1</label>
    </ligand>
</feature>
<feature type="binding site" evidence="1">
    <location>
        <position position="217"/>
    </location>
    <ligand>
        <name>Mg(2+)</name>
        <dbReference type="ChEBI" id="CHEBI:18420"/>
        <label>2</label>
    </ligand>
</feature>
<feature type="binding site" evidence="1">
    <location>
        <position position="221"/>
    </location>
    <ligand>
        <name>Mg(2+)</name>
        <dbReference type="ChEBI" id="CHEBI:18420"/>
        <label>1</label>
    </ligand>
</feature>
<feature type="binding site" evidence="1">
    <location>
        <position position="389"/>
    </location>
    <ligand>
        <name>Mg(2+)</name>
        <dbReference type="ChEBI" id="CHEBI:18420"/>
        <label>2</label>
    </ligand>
</feature>
<feature type="binding site" evidence="1">
    <location>
        <position position="393"/>
    </location>
    <ligand>
        <name>Mg(2+)</name>
        <dbReference type="ChEBI" id="CHEBI:18420"/>
        <label>2</label>
    </ligand>
</feature>
<feature type="binding site" evidence="1">
    <location>
        <position position="414"/>
    </location>
    <ligand>
        <name>substrate</name>
    </ligand>
</feature>
<protein>
    <recommendedName>
        <fullName evidence="1">Ketol-acid reductoisomerase (NADP(+))</fullName>
        <shortName evidence="1">KARI</shortName>
        <ecNumber evidence="1">1.1.1.86</ecNumber>
    </recommendedName>
    <alternativeName>
        <fullName evidence="1">Acetohydroxy-acid isomeroreductase</fullName>
        <shortName evidence="1">AHIR</shortName>
    </alternativeName>
    <alternativeName>
        <fullName evidence="1">Alpha-keto-beta-hydroxylacyl reductoisomerase</fullName>
    </alternativeName>
    <alternativeName>
        <fullName evidence="1">Ketol-acid reductoisomerase type 2</fullName>
    </alternativeName>
    <alternativeName>
        <fullName evidence="1">Ketol-acid reductoisomerase type II</fullName>
    </alternativeName>
</protein>
<dbReference type="EC" id="1.1.1.86" evidence="1"/>
<dbReference type="EMBL" id="BA000031">
    <property type="protein sequence ID" value="BAC58298.1"/>
    <property type="molecule type" value="Genomic_DNA"/>
</dbReference>
<dbReference type="RefSeq" id="NP_796414.1">
    <property type="nucleotide sequence ID" value="NC_004603.1"/>
</dbReference>
<dbReference type="RefSeq" id="WP_005455226.1">
    <property type="nucleotide sequence ID" value="NC_004603.1"/>
</dbReference>
<dbReference type="SMR" id="Q87TN4"/>
<dbReference type="GeneID" id="1187497"/>
<dbReference type="KEGG" id="vpa:VP0035"/>
<dbReference type="PATRIC" id="fig|223926.6.peg.35"/>
<dbReference type="eggNOG" id="COG0059">
    <property type="taxonomic scope" value="Bacteria"/>
</dbReference>
<dbReference type="HOGENOM" id="CLU_551905_0_0_6"/>
<dbReference type="UniPathway" id="UPA00047">
    <property type="reaction ID" value="UER00056"/>
</dbReference>
<dbReference type="UniPathway" id="UPA00049">
    <property type="reaction ID" value="UER00060"/>
</dbReference>
<dbReference type="Proteomes" id="UP000002493">
    <property type="component" value="Chromosome 1"/>
</dbReference>
<dbReference type="GO" id="GO:0005829">
    <property type="term" value="C:cytosol"/>
    <property type="evidence" value="ECO:0007669"/>
    <property type="project" value="TreeGrafter"/>
</dbReference>
<dbReference type="GO" id="GO:0004455">
    <property type="term" value="F:ketol-acid reductoisomerase activity"/>
    <property type="evidence" value="ECO:0007669"/>
    <property type="project" value="UniProtKB-UniRule"/>
</dbReference>
<dbReference type="GO" id="GO:0000287">
    <property type="term" value="F:magnesium ion binding"/>
    <property type="evidence" value="ECO:0007669"/>
    <property type="project" value="UniProtKB-UniRule"/>
</dbReference>
<dbReference type="GO" id="GO:0009097">
    <property type="term" value="P:isoleucine biosynthetic process"/>
    <property type="evidence" value="ECO:0007669"/>
    <property type="project" value="UniProtKB-UniRule"/>
</dbReference>
<dbReference type="GO" id="GO:0009099">
    <property type="term" value="P:L-valine biosynthetic process"/>
    <property type="evidence" value="ECO:0007669"/>
    <property type="project" value="UniProtKB-UniRule"/>
</dbReference>
<dbReference type="FunFam" id="1.10.1040.10:FF:000007">
    <property type="entry name" value="Ketol-acid reductoisomerase (NADP(+))"/>
    <property type="match status" value="1"/>
</dbReference>
<dbReference type="FunFam" id="3.40.50.720:FF:000043">
    <property type="entry name" value="Ketol-acid reductoisomerase (NADP(+))"/>
    <property type="match status" value="1"/>
</dbReference>
<dbReference type="Gene3D" id="1.10.1040.10">
    <property type="entry name" value="N-(1-d-carboxylethyl)-l-norvaline Dehydrogenase, domain 2"/>
    <property type="match status" value="1"/>
</dbReference>
<dbReference type="Gene3D" id="3.40.50.720">
    <property type="entry name" value="NAD(P)-binding Rossmann-like Domain"/>
    <property type="match status" value="1"/>
</dbReference>
<dbReference type="HAMAP" id="MF_00435">
    <property type="entry name" value="IlvC"/>
    <property type="match status" value="1"/>
</dbReference>
<dbReference type="InterPro" id="IPR008927">
    <property type="entry name" value="6-PGluconate_DH-like_C_sf"/>
</dbReference>
<dbReference type="InterPro" id="IPR013328">
    <property type="entry name" value="6PGD_dom2"/>
</dbReference>
<dbReference type="InterPro" id="IPR013023">
    <property type="entry name" value="KARI"/>
</dbReference>
<dbReference type="InterPro" id="IPR000506">
    <property type="entry name" value="KARI_C"/>
</dbReference>
<dbReference type="InterPro" id="IPR013116">
    <property type="entry name" value="KARI_N"/>
</dbReference>
<dbReference type="InterPro" id="IPR036291">
    <property type="entry name" value="NAD(P)-bd_dom_sf"/>
</dbReference>
<dbReference type="NCBIfam" id="TIGR00465">
    <property type="entry name" value="ilvC"/>
    <property type="match status" value="1"/>
</dbReference>
<dbReference type="NCBIfam" id="NF003557">
    <property type="entry name" value="PRK05225.1"/>
    <property type="match status" value="1"/>
</dbReference>
<dbReference type="PANTHER" id="PTHR21371">
    <property type="entry name" value="KETOL-ACID REDUCTOISOMERASE, MITOCHONDRIAL"/>
    <property type="match status" value="1"/>
</dbReference>
<dbReference type="PANTHER" id="PTHR21371:SF1">
    <property type="entry name" value="KETOL-ACID REDUCTOISOMERASE, MITOCHONDRIAL"/>
    <property type="match status" value="1"/>
</dbReference>
<dbReference type="Pfam" id="PF01450">
    <property type="entry name" value="KARI_C"/>
    <property type="match status" value="2"/>
</dbReference>
<dbReference type="Pfam" id="PF07991">
    <property type="entry name" value="KARI_N"/>
    <property type="match status" value="1"/>
</dbReference>
<dbReference type="SUPFAM" id="SSF48179">
    <property type="entry name" value="6-phosphogluconate dehydrogenase C-terminal domain-like"/>
    <property type="match status" value="2"/>
</dbReference>
<dbReference type="SUPFAM" id="SSF51735">
    <property type="entry name" value="NAD(P)-binding Rossmann-fold domains"/>
    <property type="match status" value="1"/>
</dbReference>
<dbReference type="PROSITE" id="PS51851">
    <property type="entry name" value="KARI_C"/>
    <property type="match status" value="2"/>
</dbReference>
<dbReference type="PROSITE" id="PS51850">
    <property type="entry name" value="KARI_N"/>
    <property type="match status" value="1"/>
</dbReference>